<dbReference type="EC" id="1.14.11.18" evidence="1"/>
<dbReference type="EMBL" id="AF011925">
    <property type="protein sequence ID" value="AAB65800.1"/>
    <property type="molecule type" value="mRNA"/>
</dbReference>
<dbReference type="EMBL" id="BC102460">
    <property type="protein sequence ID" value="AAI02461.1"/>
    <property type="molecule type" value="mRNA"/>
</dbReference>
<dbReference type="RefSeq" id="NP_776567.1">
    <property type="nucleotide sequence ID" value="NM_174142.2"/>
</dbReference>
<dbReference type="SMR" id="O18778"/>
<dbReference type="FunCoup" id="O18778">
    <property type="interactions" value="469"/>
</dbReference>
<dbReference type="STRING" id="9913.ENSBTAP00000010126"/>
<dbReference type="PaxDb" id="9913-ENSBTAP00000010126"/>
<dbReference type="GeneID" id="281400"/>
<dbReference type="KEGG" id="bta:281400"/>
<dbReference type="CTD" id="5264"/>
<dbReference type="VEuPathDB" id="HostDB:ENSBTAG00000007700"/>
<dbReference type="eggNOG" id="KOG3290">
    <property type="taxonomic scope" value="Eukaryota"/>
</dbReference>
<dbReference type="HOGENOM" id="CLU_060877_0_0_1"/>
<dbReference type="InParanoid" id="O18778"/>
<dbReference type="OMA" id="CCAWTAM"/>
<dbReference type="OrthoDB" id="2328924at2759"/>
<dbReference type="TreeFam" id="TF313667"/>
<dbReference type="Reactome" id="R-BTA-389599">
    <property type="pathway name" value="Alpha-oxidation of phytanate"/>
</dbReference>
<dbReference type="Reactome" id="R-BTA-9033241">
    <property type="pathway name" value="Peroxisomal protein import"/>
</dbReference>
<dbReference type="UniPathway" id="UPA00199"/>
<dbReference type="Proteomes" id="UP000009136">
    <property type="component" value="Chromosome 13"/>
</dbReference>
<dbReference type="Bgee" id="ENSBTAG00000007700">
    <property type="expression patterns" value="Expressed in gluteus medius and 103 other cell types or tissues"/>
</dbReference>
<dbReference type="GO" id="GO:0005777">
    <property type="term" value="C:peroxisome"/>
    <property type="evidence" value="ECO:0007669"/>
    <property type="project" value="UniProtKB-SubCell"/>
</dbReference>
<dbReference type="GO" id="GO:0031418">
    <property type="term" value="F:L-ascorbic acid binding"/>
    <property type="evidence" value="ECO:0007669"/>
    <property type="project" value="UniProtKB-KW"/>
</dbReference>
<dbReference type="GO" id="GO:0046872">
    <property type="term" value="F:metal ion binding"/>
    <property type="evidence" value="ECO:0007669"/>
    <property type="project" value="UniProtKB-KW"/>
</dbReference>
<dbReference type="GO" id="GO:0048244">
    <property type="term" value="F:phytanoyl-CoA dioxygenase activity"/>
    <property type="evidence" value="ECO:0000318"/>
    <property type="project" value="GO_Central"/>
</dbReference>
<dbReference type="GO" id="GO:0001561">
    <property type="term" value="P:fatty acid alpha-oxidation"/>
    <property type="evidence" value="ECO:0000318"/>
    <property type="project" value="GO_Central"/>
</dbReference>
<dbReference type="FunFam" id="2.60.120.620:FF:000012">
    <property type="entry name" value="Phytanoyl-CoA dioxygenase, peroxisomal"/>
    <property type="match status" value="1"/>
</dbReference>
<dbReference type="Gene3D" id="2.60.120.620">
    <property type="entry name" value="q2cbj1_9rhob like domain"/>
    <property type="match status" value="1"/>
</dbReference>
<dbReference type="InterPro" id="IPR047128">
    <property type="entry name" value="PhyH"/>
</dbReference>
<dbReference type="InterPro" id="IPR008775">
    <property type="entry name" value="Phytyl_CoA_dOase-like"/>
</dbReference>
<dbReference type="PANTHER" id="PTHR21308">
    <property type="entry name" value="PHYTANOYL-COA ALPHA-HYDROXYLASE"/>
    <property type="match status" value="1"/>
</dbReference>
<dbReference type="PANTHER" id="PTHR21308:SF1">
    <property type="entry name" value="PHYTANOYL-COA DIOXYGENASE, PEROXISOMAL"/>
    <property type="match status" value="1"/>
</dbReference>
<dbReference type="Pfam" id="PF05721">
    <property type="entry name" value="PhyH"/>
    <property type="match status" value="1"/>
</dbReference>
<dbReference type="SUPFAM" id="SSF51197">
    <property type="entry name" value="Clavaminate synthase-like"/>
    <property type="match status" value="1"/>
</dbReference>
<proteinExistence type="evidence at transcript level"/>
<organism>
    <name type="scientific">Bos taurus</name>
    <name type="common">Bovine</name>
    <dbReference type="NCBI Taxonomy" id="9913"/>
    <lineage>
        <taxon>Eukaryota</taxon>
        <taxon>Metazoa</taxon>
        <taxon>Chordata</taxon>
        <taxon>Craniata</taxon>
        <taxon>Vertebrata</taxon>
        <taxon>Euteleostomi</taxon>
        <taxon>Mammalia</taxon>
        <taxon>Eutheria</taxon>
        <taxon>Laurasiatheria</taxon>
        <taxon>Artiodactyla</taxon>
        <taxon>Ruminantia</taxon>
        <taxon>Pecora</taxon>
        <taxon>Bovidae</taxon>
        <taxon>Bovinae</taxon>
        <taxon>Bos</taxon>
    </lineage>
</organism>
<gene>
    <name type="primary">PHYH</name>
    <name type="synonym">LN1</name>
    <name type="synonym">PAHX</name>
</gene>
<reference key="1">
    <citation type="submission" date="1997-07" db="EMBL/GenBank/DDBJ databases">
        <authorList>
            <person name="Oshikawa Y."/>
            <person name="Carlson S.G."/>
            <person name="Lee J."/>
            <person name="Yoshizawa N."/>
            <person name="Ballermann B.J."/>
        </authorList>
    </citation>
    <scope>NUCLEOTIDE SEQUENCE [MRNA]</scope>
</reference>
<reference key="2">
    <citation type="submission" date="2005-08" db="EMBL/GenBank/DDBJ databases">
        <authorList>
            <consortium name="NIH - Mammalian Gene Collection (MGC) project"/>
        </authorList>
    </citation>
    <scope>NUCLEOTIDE SEQUENCE [LARGE SCALE MRNA]</scope>
    <source>
        <strain>Crossbred X Angus</strain>
        <tissue>Ileum</tissue>
    </source>
</reference>
<evidence type="ECO:0000250" key="1">
    <source>
        <dbReference type="UniProtKB" id="O14832"/>
    </source>
</evidence>
<evidence type="ECO:0000250" key="2">
    <source>
        <dbReference type="UniProtKB" id="O35386"/>
    </source>
</evidence>
<evidence type="ECO:0000250" key="3">
    <source>
        <dbReference type="UniProtKB" id="P57093"/>
    </source>
</evidence>
<evidence type="ECO:0000305" key="4"/>
<feature type="transit peptide" description="Peroxisome" evidence="3">
    <location>
        <begin position="1"/>
        <end position="30"/>
    </location>
</feature>
<feature type="chain" id="PRO_0000024052" description="Phytanoyl-CoA dioxygenase, peroxisomal">
    <location>
        <begin position="31"/>
        <end position="337"/>
    </location>
</feature>
<feature type="binding site" evidence="1">
    <location>
        <position position="120"/>
    </location>
    <ligand>
        <name>2-oxoglutarate</name>
        <dbReference type="ChEBI" id="CHEBI:16810"/>
    </ligand>
</feature>
<feature type="binding site" evidence="1">
    <location>
        <position position="157"/>
    </location>
    <ligand>
        <name>2-oxoglutarate</name>
        <dbReference type="ChEBI" id="CHEBI:16810"/>
    </ligand>
</feature>
<feature type="binding site" evidence="1">
    <location>
        <begin position="175"/>
        <end position="177"/>
    </location>
    <ligand>
        <name>2-oxoglutarate</name>
        <dbReference type="ChEBI" id="CHEBI:16810"/>
    </ligand>
</feature>
<feature type="binding site" evidence="1">
    <location>
        <position position="175"/>
    </location>
    <ligand>
        <name>Fe cation</name>
        <dbReference type="ChEBI" id="CHEBI:24875"/>
    </ligand>
</feature>
<feature type="binding site" evidence="1">
    <location>
        <position position="177"/>
    </location>
    <ligand>
        <name>Fe cation</name>
        <dbReference type="ChEBI" id="CHEBI:24875"/>
    </ligand>
</feature>
<feature type="binding site" evidence="1">
    <location>
        <position position="193"/>
    </location>
    <ligand>
        <name>2-oxoglutarate</name>
        <dbReference type="ChEBI" id="CHEBI:16810"/>
    </ligand>
</feature>
<feature type="binding site" evidence="1">
    <location>
        <position position="264"/>
    </location>
    <ligand>
        <name>Fe cation</name>
        <dbReference type="ChEBI" id="CHEBI:24875"/>
    </ligand>
</feature>
<feature type="binding site" evidence="1">
    <location>
        <position position="266"/>
    </location>
    <ligand>
        <name>2-oxoglutarate</name>
        <dbReference type="ChEBI" id="CHEBI:16810"/>
    </ligand>
</feature>
<feature type="binding site" evidence="1">
    <location>
        <position position="275"/>
    </location>
    <ligand>
        <name>2-oxoglutarate</name>
        <dbReference type="ChEBI" id="CHEBI:16810"/>
    </ligand>
</feature>
<feature type="modified residue" description="N6-succinyllysine" evidence="2">
    <location>
        <position position="59"/>
    </location>
</feature>
<feature type="modified residue" description="N6-succinyllysine" evidence="2">
    <location>
        <position position="108"/>
    </location>
</feature>
<feature type="modified residue" description="N6-succinyllysine" evidence="2">
    <location>
        <position position="252"/>
    </location>
</feature>
<name>PAHX_BOVIN</name>
<protein>
    <recommendedName>
        <fullName>Phytanoyl-CoA dioxygenase, peroxisomal</fullName>
        <ecNumber evidence="1">1.14.11.18</ecNumber>
    </recommendedName>
    <alternativeName>
        <fullName>Phytanic acid oxidase</fullName>
    </alternativeName>
    <alternativeName>
        <fullName>Phytanoyl-CoA alpha-hydroxylase</fullName>
        <shortName>PhyH</shortName>
    </alternativeName>
</protein>
<accession>O18778</accession>
<accession>Q3T0C0</accession>
<keyword id="KW-0223">Dioxygenase</keyword>
<keyword id="KW-0408">Iron</keyword>
<keyword id="KW-0479">Metal-binding</keyword>
<keyword id="KW-0560">Oxidoreductase</keyword>
<keyword id="KW-0576">Peroxisome</keyword>
<keyword id="KW-1185">Reference proteome</keyword>
<keyword id="KW-0809">Transit peptide</keyword>
<keyword id="KW-0847">Vitamin C</keyword>
<sequence>MDRNRASARLTVLLRHLGCRSAGTIIAHHTSGVGSLASFHPQQFQYTRENNVLSLEQRKFYEENGFLVIKNLVSDADIQRFRNEFERICRKEVKPLGLSVMRDVTITKSEYVPSEKVVSKVQDFQEDEELFRYCTLPEILKYVECFTGPNIMAMHTMLINKPPDSGKKTSRHPLHQDLHYFPFRPSNSIVCAWTAMEHIDRNNGCLVVLPGTHKGPLQPHDYPQWEGGVNIMFHGIQDYDKNNARVHLVMEKGDTVFFHPLLIHGSGRNKSQGFRKAISCHFADANCHYIDVEGTSQENIEKEVVDIVRKKYGFKDVTLKDVWTFRGRVVKGERINL</sequence>
<comment type="function">
    <text evidence="1">Catalyzes the 2-hydroxylation of not only racemic phytanoyl-CoA and the isomers of 3-methylhexadecanoyl-CoA, but also a variety of other mono- branched 3-methylacyl-CoA esters (with a chain length of at least seven carbon atoms) and straight-chain acyl-CoA esters (with a chain length longer than four carbon atoms) (By similarity). Does not hydroxylate long and very long straight chain acyl-CoAs or 2-methyl-and 4-methyl-branched acyl-CoAs (By similarity).</text>
</comment>
<comment type="catalytic activity">
    <reaction evidence="1">
        <text>phytanoyl-CoA + 2-oxoglutarate + O2 = 2-hydroxyphytanoyl-CoA + succinate + CO2</text>
        <dbReference type="Rhea" id="RHEA:16065"/>
        <dbReference type="ChEBI" id="CHEBI:15379"/>
        <dbReference type="ChEBI" id="CHEBI:16526"/>
        <dbReference type="ChEBI" id="CHEBI:16810"/>
        <dbReference type="ChEBI" id="CHEBI:30031"/>
        <dbReference type="ChEBI" id="CHEBI:57334"/>
        <dbReference type="ChEBI" id="CHEBI:57391"/>
        <dbReference type="EC" id="1.14.11.18"/>
    </reaction>
    <physiologicalReaction direction="left-to-right" evidence="1">
        <dbReference type="Rhea" id="RHEA:16066"/>
    </physiologicalReaction>
</comment>
<comment type="catalytic activity">
    <reaction evidence="1">
        <text>3-methylhexadecanoyl-CoA + 2-oxoglutarate + O2 = 2-hydroxy-3-methylhexadecanoyl-CoA + succinate + CO2</text>
        <dbReference type="Rhea" id="RHEA:44000"/>
        <dbReference type="ChEBI" id="CHEBI:15379"/>
        <dbReference type="ChEBI" id="CHEBI:16526"/>
        <dbReference type="ChEBI" id="CHEBI:16810"/>
        <dbReference type="ChEBI" id="CHEBI:30031"/>
        <dbReference type="ChEBI" id="CHEBI:58784"/>
        <dbReference type="ChEBI" id="CHEBI:83969"/>
    </reaction>
    <physiologicalReaction direction="left-to-right" evidence="1">
        <dbReference type="Rhea" id="RHEA:44001"/>
    </physiologicalReaction>
</comment>
<comment type="catalytic activity">
    <reaction evidence="1">
        <text>hexadecanoyl-CoA + 2-oxoglutarate + O2 = 2-hydroxyhexadecanoyl-CoA + succinate + CO2</text>
        <dbReference type="Rhea" id="RHEA:54596"/>
        <dbReference type="ChEBI" id="CHEBI:15379"/>
        <dbReference type="ChEBI" id="CHEBI:16526"/>
        <dbReference type="ChEBI" id="CHEBI:16810"/>
        <dbReference type="ChEBI" id="CHEBI:30031"/>
        <dbReference type="ChEBI" id="CHEBI:57379"/>
        <dbReference type="ChEBI" id="CHEBI:74115"/>
    </reaction>
    <physiologicalReaction direction="left-to-right" evidence="1">
        <dbReference type="Rhea" id="RHEA:54597"/>
    </physiologicalReaction>
</comment>
<comment type="catalytic activity">
    <reaction evidence="1">
        <text>octanoyl-CoA + 2-oxoglutarate + O2 = 2-hydroxyoctanoyl-CoA + succinate + CO2</text>
        <dbReference type="Rhea" id="RHEA:54600"/>
        <dbReference type="ChEBI" id="CHEBI:15379"/>
        <dbReference type="ChEBI" id="CHEBI:16526"/>
        <dbReference type="ChEBI" id="CHEBI:16810"/>
        <dbReference type="ChEBI" id="CHEBI:30031"/>
        <dbReference type="ChEBI" id="CHEBI:57386"/>
        <dbReference type="ChEBI" id="CHEBI:138290"/>
    </reaction>
    <physiologicalReaction direction="left-to-right" evidence="1">
        <dbReference type="Rhea" id="RHEA:54601"/>
    </physiologicalReaction>
</comment>
<comment type="catalytic activity">
    <reaction evidence="1">
        <text>decanoyl-CoA + 2-oxoglutarate + O2 = 2-hydroxydecanoyl-CoA + succinate + CO2</text>
        <dbReference type="Rhea" id="RHEA:54604"/>
        <dbReference type="ChEBI" id="CHEBI:15379"/>
        <dbReference type="ChEBI" id="CHEBI:16526"/>
        <dbReference type="ChEBI" id="CHEBI:16810"/>
        <dbReference type="ChEBI" id="CHEBI:30031"/>
        <dbReference type="ChEBI" id="CHEBI:61430"/>
        <dbReference type="ChEBI" id="CHEBI:138292"/>
    </reaction>
    <physiologicalReaction direction="left-to-right" evidence="1">
        <dbReference type="Rhea" id="RHEA:54605"/>
    </physiologicalReaction>
</comment>
<comment type="catalytic activity">
    <reaction evidence="1">
        <text>3-methylbutanoyl-CoA + 2-oxoglutarate + O2 = 2-hydroxy-3-methylbutanoyl-CoA + succinate + CO2</text>
        <dbReference type="Rhea" id="RHEA:54612"/>
        <dbReference type="ChEBI" id="CHEBI:15379"/>
        <dbReference type="ChEBI" id="CHEBI:16526"/>
        <dbReference type="ChEBI" id="CHEBI:16810"/>
        <dbReference type="ChEBI" id="CHEBI:30031"/>
        <dbReference type="ChEBI" id="CHEBI:57345"/>
        <dbReference type="ChEBI" id="CHEBI:138296"/>
    </reaction>
    <physiologicalReaction direction="left-to-right" evidence="1">
        <dbReference type="Rhea" id="RHEA:54613"/>
    </physiologicalReaction>
</comment>
<comment type="catalytic activity">
    <reaction evidence="1">
        <text>heptadecanoyl-CoA + 2-oxoglutarate + O2 = 2-hydroxyheptadecanoyl-CoA + succinate + CO2</text>
        <dbReference type="Rhea" id="RHEA:54616"/>
        <dbReference type="ChEBI" id="CHEBI:15379"/>
        <dbReference type="ChEBI" id="CHEBI:16526"/>
        <dbReference type="ChEBI" id="CHEBI:16810"/>
        <dbReference type="ChEBI" id="CHEBI:30031"/>
        <dbReference type="ChEBI" id="CHEBI:74307"/>
        <dbReference type="ChEBI" id="CHEBI:138297"/>
    </reaction>
    <physiologicalReaction direction="left-to-right" evidence="1">
        <dbReference type="Rhea" id="RHEA:54617"/>
    </physiologicalReaction>
</comment>
<comment type="catalytic activity">
    <reaction evidence="1">
        <text>eicosanoyl-CoA + 2-oxoglutarate + O2 = 2-hydroxyeicosanoyl-CoA + succinate + CO2</text>
        <dbReference type="Rhea" id="RHEA:54620"/>
        <dbReference type="ChEBI" id="CHEBI:15379"/>
        <dbReference type="ChEBI" id="CHEBI:16526"/>
        <dbReference type="ChEBI" id="CHEBI:16810"/>
        <dbReference type="ChEBI" id="CHEBI:30031"/>
        <dbReference type="ChEBI" id="CHEBI:57380"/>
        <dbReference type="ChEBI" id="CHEBI:138298"/>
    </reaction>
    <physiologicalReaction direction="left-to-right" evidence="1">
        <dbReference type="Rhea" id="RHEA:54621"/>
    </physiologicalReaction>
</comment>
<comment type="catalytic activity">
    <reaction evidence="1">
        <text>octadecanoyl-CoA + 2-oxoglutarate + O2 = 2-hydroxyoctadecanoyl-CoA + succinate + CO2</text>
        <dbReference type="Rhea" id="RHEA:54624"/>
        <dbReference type="ChEBI" id="CHEBI:15379"/>
        <dbReference type="ChEBI" id="CHEBI:16526"/>
        <dbReference type="ChEBI" id="CHEBI:16810"/>
        <dbReference type="ChEBI" id="CHEBI:30031"/>
        <dbReference type="ChEBI" id="CHEBI:57394"/>
        <dbReference type="ChEBI" id="CHEBI:74116"/>
    </reaction>
    <physiologicalReaction direction="left-to-right" evidence="1">
        <dbReference type="Rhea" id="RHEA:54625"/>
    </physiologicalReaction>
</comment>
<comment type="catalytic activity">
    <reaction evidence="1">
        <text>dodecanoyl-CoA + 2-oxoglutarate + O2 = 2-hydroxydodecanoyl-CoA + succinate + CO2</text>
        <dbReference type="Rhea" id="RHEA:54628"/>
        <dbReference type="ChEBI" id="CHEBI:15379"/>
        <dbReference type="ChEBI" id="CHEBI:16526"/>
        <dbReference type="ChEBI" id="CHEBI:16810"/>
        <dbReference type="ChEBI" id="CHEBI:30031"/>
        <dbReference type="ChEBI" id="CHEBI:57375"/>
        <dbReference type="ChEBI" id="CHEBI:138299"/>
    </reaction>
    <physiologicalReaction direction="left-to-right" evidence="1">
        <dbReference type="Rhea" id="RHEA:54629"/>
    </physiologicalReaction>
</comment>
<comment type="catalytic activity">
    <reaction evidence="1">
        <text>tetradecanoyl-CoA + 2-oxoglutarate + O2 = 2-hydroxytetradecanoyl-CoA + succinate + CO2</text>
        <dbReference type="Rhea" id="RHEA:54632"/>
        <dbReference type="ChEBI" id="CHEBI:15379"/>
        <dbReference type="ChEBI" id="CHEBI:16526"/>
        <dbReference type="ChEBI" id="CHEBI:16810"/>
        <dbReference type="ChEBI" id="CHEBI:30031"/>
        <dbReference type="ChEBI" id="CHEBI:57385"/>
        <dbReference type="ChEBI" id="CHEBI:138300"/>
    </reaction>
    <physiologicalReaction direction="left-to-right" evidence="1">
        <dbReference type="Rhea" id="RHEA:54633"/>
    </physiologicalReaction>
</comment>
<comment type="catalytic activity">
    <reaction evidence="1">
        <text>hexanoyl-CoA + 2-oxoglutarate + O2 = 2-hydroxyhexanoyl-CoA + succinate + CO2</text>
        <dbReference type="Rhea" id="RHEA:55172"/>
        <dbReference type="ChEBI" id="CHEBI:15379"/>
        <dbReference type="ChEBI" id="CHEBI:16526"/>
        <dbReference type="ChEBI" id="CHEBI:16810"/>
        <dbReference type="ChEBI" id="CHEBI:30031"/>
        <dbReference type="ChEBI" id="CHEBI:62620"/>
        <dbReference type="ChEBI" id="CHEBI:138630"/>
    </reaction>
    <physiologicalReaction direction="left-to-right" evidence="1">
        <dbReference type="Rhea" id="RHEA:55173"/>
    </physiologicalReaction>
</comment>
<comment type="catalytic activity">
    <reaction evidence="1">
        <text>butanoyl-CoA + 2-oxoglutarate + O2 = 2-hydroxybutanoyl-CoA + succinate + CO2</text>
        <dbReference type="Rhea" id="RHEA:55176"/>
        <dbReference type="ChEBI" id="CHEBI:15379"/>
        <dbReference type="ChEBI" id="CHEBI:16526"/>
        <dbReference type="ChEBI" id="CHEBI:16810"/>
        <dbReference type="ChEBI" id="CHEBI:30031"/>
        <dbReference type="ChEBI" id="CHEBI:57371"/>
        <dbReference type="ChEBI" id="CHEBI:138628"/>
    </reaction>
    <physiologicalReaction direction="left-to-right" evidence="1">
        <dbReference type="Rhea" id="RHEA:55177"/>
    </physiologicalReaction>
</comment>
<comment type="catalytic activity">
    <reaction evidence="1">
        <text>3-methylnonanoyl-CoA + 2-oxoglutarate + O2 = 2-hydroxy-3-methylnonanoyl-CoA + succinate + CO2</text>
        <dbReference type="Rhea" id="RHEA:55180"/>
        <dbReference type="ChEBI" id="CHEBI:15379"/>
        <dbReference type="ChEBI" id="CHEBI:16526"/>
        <dbReference type="ChEBI" id="CHEBI:16810"/>
        <dbReference type="ChEBI" id="CHEBI:30031"/>
        <dbReference type="ChEBI" id="CHEBI:138633"/>
        <dbReference type="ChEBI" id="CHEBI:138634"/>
    </reaction>
    <physiologicalReaction direction="left-to-right" evidence="1">
        <dbReference type="Rhea" id="RHEA:55181"/>
    </physiologicalReaction>
</comment>
<comment type="catalytic activity">
    <reaction evidence="1">
        <text>3-methylundecanoyl-CoA + 2-oxoglutarate + O2 = 2-hydroxy-3-methylundecanoyl-CoA + succinate + CO2</text>
        <dbReference type="Rhea" id="RHEA:55184"/>
        <dbReference type="ChEBI" id="CHEBI:15379"/>
        <dbReference type="ChEBI" id="CHEBI:16526"/>
        <dbReference type="ChEBI" id="CHEBI:16810"/>
        <dbReference type="ChEBI" id="CHEBI:30031"/>
        <dbReference type="ChEBI" id="CHEBI:84183"/>
        <dbReference type="ChEBI" id="CHEBI:138632"/>
    </reaction>
    <physiologicalReaction direction="left-to-right" evidence="1">
        <dbReference type="Rhea" id="RHEA:55185"/>
    </physiologicalReaction>
</comment>
<comment type="catalytic activity">
    <reaction evidence="1">
        <text>3-methyldodecanoyl-CoA + 2-oxoglutarate + O2 = 2-hydroxy-3-methyldodecanoyl-CoA + succinate + CO2</text>
        <dbReference type="Rhea" id="RHEA:55192"/>
        <dbReference type="ChEBI" id="CHEBI:15379"/>
        <dbReference type="ChEBI" id="CHEBI:16526"/>
        <dbReference type="ChEBI" id="CHEBI:16810"/>
        <dbReference type="ChEBI" id="CHEBI:30031"/>
        <dbReference type="ChEBI" id="CHEBI:138636"/>
        <dbReference type="ChEBI" id="CHEBI:138637"/>
    </reaction>
    <physiologicalReaction direction="left-to-right" evidence="1">
        <dbReference type="Rhea" id="RHEA:55193"/>
    </physiologicalReaction>
</comment>
<comment type="cofactor">
    <cofactor evidence="1">
        <name>Fe cation</name>
        <dbReference type="ChEBI" id="CHEBI:24875"/>
    </cofactor>
</comment>
<comment type="cofactor">
    <cofactor evidence="1">
        <name>L-ascorbate</name>
        <dbReference type="ChEBI" id="CHEBI:38290"/>
    </cofactor>
</comment>
<comment type="cofactor">
    <cofactor evidence="1">
        <name>ATP</name>
        <dbReference type="ChEBI" id="CHEBI:30616"/>
    </cofactor>
</comment>
<comment type="cofactor">
    <cofactor evidence="1">
        <name>Mg(2+)</name>
        <dbReference type="ChEBI" id="CHEBI:18420"/>
    </cofactor>
</comment>
<comment type="pathway">
    <text>Lipid metabolism; fatty acid metabolism.</text>
</comment>
<comment type="subunit">
    <text evidence="1">Interacts with FKBP52 and PHYHIP.</text>
</comment>
<comment type="subcellular location">
    <subcellularLocation>
        <location evidence="1">Peroxisome</location>
    </subcellularLocation>
</comment>
<comment type="similarity">
    <text evidence="4">Belongs to the PhyH family.</text>
</comment>